<comment type="catalytic activity">
    <reaction>
        <text>D-mannitol 1-phosphate + NAD(+) = beta-D-fructose 6-phosphate + NADH + H(+)</text>
        <dbReference type="Rhea" id="RHEA:19661"/>
        <dbReference type="ChEBI" id="CHEBI:15378"/>
        <dbReference type="ChEBI" id="CHEBI:57540"/>
        <dbReference type="ChEBI" id="CHEBI:57634"/>
        <dbReference type="ChEBI" id="CHEBI:57945"/>
        <dbReference type="ChEBI" id="CHEBI:61381"/>
        <dbReference type="EC" id="1.1.1.17"/>
    </reaction>
</comment>
<comment type="similarity">
    <text evidence="2">Belongs to the mannitol dehydrogenase family.</text>
</comment>
<protein>
    <recommendedName>
        <fullName>Mannitol-1-phosphate 5-dehydrogenase</fullName>
        <ecNumber>1.1.1.17</ecNumber>
    </recommendedName>
</protein>
<name>MTLD_GEOSE</name>
<proteinExistence type="inferred from homology"/>
<accession>Q45421</accession>
<sequence>MLAVHFGAGNIGRGFIGSLLSQSGYEVVFVDINDELVRLLKEKQEYRVIIADENRQELLIRNVSAVNSQTEREKVIDYITKAHLITTAVGPHILPAIATILAEGLQKRITINKTPLHIIACENMIGGSDVLKSHVFEKISEADKPLFEKYYGFLNCAVDRIVPNQKHDDPLSVVVEPFFEWVIEKRNIIGAIPPIQGAHFVDDLKPYIERKLFTVNTGHAIASYLGYYKKLQTIQEAMCDQEIRSDVEKALHESGAVLVKKYGWNENEHQSYIQKIIQRFINPSISDEVVRVARSPIRKLGANDRLIGPATQYYDLFGQVPHGLVKGIAALLLFDYENDEEAVALQKTIQETGVEGALYQYSQLEKDHPLVIAIKDQWQHLK</sequence>
<reference key="1">
    <citation type="journal article" date="1996" name="J. Bacteriol.">
        <title>Cloning, expression, and isolation of the mannitol transport protein from the thermophilic bacterium Bacillus stearothermophilus.</title>
        <authorList>
            <person name="Henstra S.A."/>
            <person name="Tolner B."/>
            <person name="ten Hoeve Duurkens R.H."/>
            <person name="Konings W.N."/>
            <person name="Robillard G.T."/>
        </authorList>
    </citation>
    <scope>NUCLEOTIDE SEQUENCE [GENOMIC DNA]</scope>
    <source>
        <strain>ATCC 29609 / DSM 2027 / NCA 1503 / NCIMB 8924</strain>
    </source>
</reference>
<organism>
    <name type="scientific">Geobacillus stearothermophilus</name>
    <name type="common">Bacillus stearothermophilus</name>
    <dbReference type="NCBI Taxonomy" id="1422"/>
    <lineage>
        <taxon>Bacteria</taxon>
        <taxon>Bacillati</taxon>
        <taxon>Bacillota</taxon>
        <taxon>Bacilli</taxon>
        <taxon>Bacillales</taxon>
        <taxon>Anoxybacillaceae</taxon>
        <taxon>Geobacillus</taxon>
    </lineage>
</organism>
<gene>
    <name type="primary">mtlD</name>
</gene>
<feature type="chain" id="PRO_0000170697" description="Mannitol-1-phosphate 5-dehydrogenase">
    <location>
        <begin position="1"/>
        <end position="382"/>
    </location>
</feature>
<feature type="binding site" evidence="1">
    <location>
        <begin position="3"/>
        <end position="14"/>
    </location>
    <ligand>
        <name>NAD(+)</name>
        <dbReference type="ChEBI" id="CHEBI:57540"/>
    </ligand>
</feature>
<keyword id="KW-0520">NAD</keyword>
<keyword id="KW-0560">Oxidoreductase</keyword>
<dbReference type="EC" id="1.1.1.17"/>
<dbReference type="EMBL" id="U18943">
    <property type="protein sequence ID" value="AAC44466.1"/>
    <property type="molecule type" value="Genomic_DNA"/>
</dbReference>
<dbReference type="SMR" id="Q45421"/>
<dbReference type="GO" id="GO:0005829">
    <property type="term" value="C:cytosol"/>
    <property type="evidence" value="ECO:0007669"/>
    <property type="project" value="TreeGrafter"/>
</dbReference>
<dbReference type="GO" id="GO:0008926">
    <property type="term" value="F:mannitol-1-phosphate 5-dehydrogenase activity"/>
    <property type="evidence" value="ECO:0007669"/>
    <property type="project" value="UniProtKB-UniRule"/>
</dbReference>
<dbReference type="GO" id="GO:0019592">
    <property type="term" value="P:mannitol catabolic process"/>
    <property type="evidence" value="ECO:0007669"/>
    <property type="project" value="TreeGrafter"/>
</dbReference>
<dbReference type="Gene3D" id="1.10.1040.10">
    <property type="entry name" value="N-(1-d-carboxylethyl)-l-norvaline Dehydrogenase, domain 2"/>
    <property type="match status" value="1"/>
</dbReference>
<dbReference type="Gene3D" id="3.40.50.720">
    <property type="entry name" value="NAD(P)-binding Rossmann-like Domain"/>
    <property type="match status" value="1"/>
</dbReference>
<dbReference type="HAMAP" id="MF_00196">
    <property type="entry name" value="Mannitol_dehydrog"/>
    <property type="match status" value="1"/>
</dbReference>
<dbReference type="InterPro" id="IPR008927">
    <property type="entry name" value="6-PGluconate_DH-like_C_sf"/>
</dbReference>
<dbReference type="InterPro" id="IPR013328">
    <property type="entry name" value="6PGD_dom2"/>
</dbReference>
<dbReference type="InterPro" id="IPR023028">
    <property type="entry name" value="Mannitol_1_phos_5_DH"/>
</dbReference>
<dbReference type="InterPro" id="IPR000669">
    <property type="entry name" value="Mannitol_DH"/>
</dbReference>
<dbReference type="InterPro" id="IPR013118">
    <property type="entry name" value="Mannitol_DH_C"/>
</dbReference>
<dbReference type="InterPro" id="IPR023027">
    <property type="entry name" value="Mannitol_DH_CS"/>
</dbReference>
<dbReference type="InterPro" id="IPR013131">
    <property type="entry name" value="Mannitol_DH_N"/>
</dbReference>
<dbReference type="InterPro" id="IPR036291">
    <property type="entry name" value="NAD(P)-bd_dom_sf"/>
</dbReference>
<dbReference type="NCBIfam" id="NF002646">
    <property type="entry name" value="PRK02318.1-2"/>
    <property type="match status" value="1"/>
</dbReference>
<dbReference type="NCBIfam" id="NF002647">
    <property type="entry name" value="PRK02318.1-3"/>
    <property type="match status" value="1"/>
</dbReference>
<dbReference type="NCBIfam" id="NF002649">
    <property type="entry name" value="PRK02318.2-1"/>
    <property type="match status" value="1"/>
</dbReference>
<dbReference type="NCBIfam" id="NF002652">
    <property type="entry name" value="PRK02318.2-5"/>
    <property type="match status" value="1"/>
</dbReference>
<dbReference type="PANTHER" id="PTHR30524:SF0">
    <property type="entry name" value="ALTRONATE OXIDOREDUCTASE-RELATED"/>
    <property type="match status" value="1"/>
</dbReference>
<dbReference type="PANTHER" id="PTHR30524">
    <property type="entry name" value="MANNITOL-1-PHOSPHATE 5-DEHYDROGENASE"/>
    <property type="match status" value="1"/>
</dbReference>
<dbReference type="Pfam" id="PF01232">
    <property type="entry name" value="Mannitol_dh"/>
    <property type="match status" value="1"/>
</dbReference>
<dbReference type="Pfam" id="PF08125">
    <property type="entry name" value="Mannitol_dh_C"/>
    <property type="match status" value="1"/>
</dbReference>
<dbReference type="PRINTS" id="PR00084">
    <property type="entry name" value="MTLDHDRGNASE"/>
</dbReference>
<dbReference type="SUPFAM" id="SSF48179">
    <property type="entry name" value="6-phosphogluconate dehydrogenase C-terminal domain-like"/>
    <property type="match status" value="1"/>
</dbReference>
<dbReference type="SUPFAM" id="SSF51735">
    <property type="entry name" value="NAD(P)-binding Rossmann-fold domains"/>
    <property type="match status" value="1"/>
</dbReference>
<dbReference type="PROSITE" id="PS00974">
    <property type="entry name" value="MANNITOL_DHGENASE"/>
    <property type="match status" value="1"/>
</dbReference>
<evidence type="ECO:0000250" key="1"/>
<evidence type="ECO:0000305" key="2"/>